<organism>
    <name type="scientific">Rickettsia montanensis</name>
    <dbReference type="NCBI Taxonomy" id="33991"/>
    <lineage>
        <taxon>Bacteria</taxon>
        <taxon>Pseudomonadati</taxon>
        <taxon>Pseudomonadota</taxon>
        <taxon>Alphaproteobacteria</taxon>
        <taxon>Rickettsiales</taxon>
        <taxon>Rickettsiaceae</taxon>
        <taxon>Rickettsieae</taxon>
        <taxon>Rickettsia</taxon>
        <taxon>spotted fever group</taxon>
    </lineage>
</organism>
<proteinExistence type="inferred from homology"/>
<evidence type="ECO:0000305" key="1"/>
<feature type="chain" id="PRO_0000280387" description="Histone-like DNA-binding protein">
    <location>
        <begin position="1"/>
        <end position="95"/>
    </location>
</feature>
<protein>
    <recommendedName>
        <fullName>Histone-like DNA-binding protein</fullName>
    </recommendedName>
</protein>
<accession>Q9AKK7</accession>
<name>HLP_RICMO</name>
<keyword id="KW-0238">DNA-binding</keyword>
<comment type="similarity">
    <text evidence="1">Belongs to the bacterial histone-like protein family.</text>
</comment>
<dbReference type="EMBL" id="AJ293330">
    <property type="protein sequence ID" value="CAC33647.1"/>
    <property type="molecule type" value="Genomic_DNA"/>
</dbReference>
<dbReference type="SMR" id="Q9AKK7"/>
<dbReference type="OMA" id="AIVHTVF"/>
<dbReference type="GO" id="GO:0005829">
    <property type="term" value="C:cytosol"/>
    <property type="evidence" value="ECO:0007669"/>
    <property type="project" value="TreeGrafter"/>
</dbReference>
<dbReference type="GO" id="GO:0003677">
    <property type="term" value="F:DNA binding"/>
    <property type="evidence" value="ECO:0007669"/>
    <property type="project" value="UniProtKB-KW"/>
</dbReference>
<dbReference type="GO" id="GO:0030527">
    <property type="term" value="F:structural constituent of chromatin"/>
    <property type="evidence" value="ECO:0007669"/>
    <property type="project" value="InterPro"/>
</dbReference>
<dbReference type="Gene3D" id="4.10.520.10">
    <property type="entry name" value="IHF-like DNA-binding proteins"/>
    <property type="match status" value="1"/>
</dbReference>
<dbReference type="InterPro" id="IPR000119">
    <property type="entry name" value="Hist_DNA-bd"/>
</dbReference>
<dbReference type="InterPro" id="IPR010992">
    <property type="entry name" value="IHF-like_DNA-bd_dom_sf"/>
</dbReference>
<dbReference type="PANTHER" id="PTHR33175">
    <property type="entry name" value="DNA-BINDING PROTEIN HU"/>
    <property type="match status" value="1"/>
</dbReference>
<dbReference type="PANTHER" id="PTHR33175:SF2">
    <property type="entry name" value="INTEGRATION HOST FACTOR SUBUNIT ALPHA"/>
    <property type="match status" value="1"/>
</dbReference>
<dbReference type="Pfam" id="PF00216">
    <property type="entry name" value="Bac_DNA_binding"/>
    <property type="match status" value="1"/>
</dbReference>
<dbReference type="SMART" id="SM00411">
    <property type="entry name" value="BHL"/>
    <property type="match status" value="1"/>
</dbReference>
<dbReference type="SUPFAM" id="SSF47729">
    <property type="entry name" value="IHF-like DNA-binding proteins"/>
    <property type="match status" value="1"/>
</dbReference>
<reference key="1">
    <citation type="journal article" date="2001" name="Mol. Biol. Evol.">
        <title>Pseudogenes, junk DNA, and the dynamics of Rickettsia genomes.</title>
        <authorList>
            <person name="Andersson J.O."/>
            <person name="Andersson S.G.E."/>
        </authorList>
    </citation>
    <scope>NUCLEOTIDE SEQUENCE [GENOMIC DNA]</scope>
</reference>
<sequence>MTITKEKIAAMLSSKLGFSNNLCEEIVHTVFSNILEIAKEQKLTLKNFGSFEVKQKNPRPGINFHTKAPVIIESKKNLRFVPSSKLKALINGSTR</sequence>